<accession>O08582</accession>
<accession>Q3UD96</accession>
<accession>Q3UGW6</accession>
<accession>Q545R1</accession>
<accession>Q80ZY5</accession>
<sequence>MAAERSRSPVDSPVPASMFAPEPSSPGAARAAAAAARLHGGFDSDCSEDGEALNGEPELDLTSKLVLVSPTSEQYDSLLRQMWERMDEGCGETIYVIGQGSDGTEYGLSEADMEASYATVKSMAEQIEADVILLRERQEAGGRVRDYLVRKRVGDNDFLEVRVAVVGNVDAGKSTLLGVLTHGELDNGRGFARQKLFRHKHEIESGRTSSVGNDILGFDSEGNVVNKPDSHGGSLEWTKICEKSSKVITFIDLAGHEKYLKTTVFGMTGHLPDFCMLMVGSNAGIVGMTKEHLGLALALNVPVFVVVTKIDMCPANILQETLKLLQRLLKSPGCRKIPVLVQSKDDVIVTASNFSSERMCPIFQISNVTGENLDLLKMFLNLLSPRTSYREEEPAEFQIDDTYSVPGVGTVVSGTTLRGLIKLNDTLLLGPDPLGNFLSIAVKSIHRKRMPVKEVRGGQTASFALKKIKRSSIRKGMVMVSPRLNPQASWEFEAEILVLHHPTTISPRYQAMVHCGSIRQTATILSMDKDCLRTGDKATVHFRFIKTPEYLHIDQRLVFREGRTKAVGTITKLLQTTNNSPMNSKPQQIKMQSTKKGPLSKREEGGPCGVPAAGGPPTGDEASSLGTAQAASTSGLQPQPKPSSGGRRRGGQRHKVKSGACVTPASGC</sequence>
<feature type="chain" id="PRO_0000122470" description="GTP-binding protein 1">
    <location>
        <begin position="1"/>
        <end position="668"/>
    </location>
</feature>
<feature type="domain" description="tr-type G" evidence="5">
    <location>
        <begin position="158"/>
        <end position="389"/>
    </location>
</feature>
<feature type="region of interest" description="Disordered" evidence="6">
    <location>
        <begin position="1"/>
        <end position="32"/>
    </location>
</feature>
<feature type="region of interest" description="G1" evidence="5">
    <location>
        <begin position="167"/>
        <end position="174"/>
    </location>
</feature>
<feature type="region of interest" description="G2" evidence="5">
    <location>
        <begin position="206"/>
        <end position="210"/>
    </location>
</feature>
<feature type="region of interest" description="G3" evidence="5">
    <location>
        <begin position="252"/>
        <end position="255"/>
    </location>
</feature>
<feature type="region of interest" description="G4" evidence="5">
    <location>
        <begin position="308"/>
        <end position="311"/>
    </location>
</feature>
<feature type="region of interest" description="G5" evidence="5">
    <location>
        <begin position="366"/>
        <end position="368"/>
    </location>
</feature>
<feature type="region of interest" description="Disordered" evidence="6">
    <location>
        <begin position="573"/>
        <end position="668"/>
    </location>
</feature>
<feature type="compositionally biased region" description="Polar residues" evidence="6">
    <location>
        <begin position="573"/>
        <end position="595"/>
    </location>
</feature>
<feature type="compositionally biased region" description="Low complexity" evidence="6">
    <location>
        <begin position="609"/>
        <end position="619"/>
    </location>
</feature>
<feature type="compositionally biased region" description="Polar residues" evidence="6">
    <location>
        <begin position="624"/>
        <end position="637"/>
    </location>
</feature>
<feature type="compositionally biased region" description="Basic residues" evidence="6">
    <location>
        <begin position="646"/>
        <end position="657"/>
    </location>
</feature>
<feature type="binding site" evidence="4">
    <location>
        <begin position="167"/>
        <end position="174"/>
    </location>
    <ligand>
        <name>GTP</name>
        <dbReference type="ChEBI" id="CHEBI:37565"/>
    </ligand>
</feature>
<feature type="binding site" evidence="4">
    <location>
        <begin position="252"/>
        <end position="256"/>
    </location>
    <ligand>
        <name>GTP</name>
        <dbReference type="ChEBI" id="CHEBI:37565"/>
    </ligand>
</feature>
<feature type="binding site" evidence="4">
    <location>
        <begin position="308"/>
        <end position="311"/>
    </location>
    <ligand>
        <name>GTP</name>
        <dbReference type="ChEBI" id="CHEBI:37565"/>
    </ligand>
</feature>
<feature type="modified residue" description="Phosphoserine" evidence="11">
    <location>
        <position position="6"/>
    </location>
</feature>
<feature type="modified residue" description="Phosphoserine" evidence="12">
    <location>
        <position position="8"/>
    </location>
</feature>
<feature type="modified residue" description="Phosphoserine" evidence="11 12">
    <location>
        <position position="12"/>
    </location>
</feature>
<feature type="modified residue" description="Phosphoserine" evidence="12">
    <location>
        <position position="24"/>
    </location>
</feature>
<feature type="modified residue" description="Phosphoserine" evidence="12">
    <location>
        <position position="25"/>
    </location>
</feature>
<feature type="modified residue" description="Phosphoserine" evidence="11 12">
    <location>
        <position position="44"/>
    </location>
</feature>
<feature type="modified residue" description="Phosphoserine" evidence="11 12">
    <location>
        <position position="47"/>
    </location>
</feature>
<feature type="modified residue" description="Phosphoserine" evidence="3">
    <location>
        <position position="69"/>
    </location>
</feature>
<feature type="modified residue" description="Phosphoserine" evidence="3">
    <location>
        <position position="580"/>
    </location>
</feature>
<feature type="sequence conflict" description="In Ref. 1; BAE28091." evidence="10" ref="1">
    <original>K</original>
    <variation>E</variation>
    <location>
        <position position="121"/>
    </location>
</feature>
<organism>
    <name type="scientific">Mus musculus</name>
    <name type="common">Mouse</name>
    <dbReference type="NCBI Taxonomy" id="10090"/>
    <lineage>
        <taxon>Eukaryota</taxon>
        <taxon>Metazoa</taxon>
        <taxon>Chordata</taxon>
        <taxon>Craniata</taxon>
        <taxon>Vertebrata</taxon>
        <taxon>Euteleostomi</taxon>
        <taxon>Mammalia</taxon>
        <taxon>Eutheria</taxon>
        <taxon>Euarchontoglires</taxon>
        <taxon>Glires</taxon>
        <taxon>Rodentia</taxon>
        <taxon>Myomorpha</taxon>
        <taxon>Muroidea</taxon>
        <taxon>Muridae</taxon>
        <taxon>Murinae</taxon>
        <taxon>Mus</taxon>
        <taxon>Mus</taxon>
    </lineage>
</organism>
<protein>
    <recommendedName>
        <fullName>GTP-binding protein 1</fullName>
        <shortName>G-protein 1</shortName>
        <shortName>GP-1</shortName>
        <shortName>GP1</shortName>
    </recommendedName>
</protein>
<keyword id="KW-0002">3D-structure</keyword>
<keyword id="KW-0963">Cytoplasm</keyword>
<keyword id="KW-0342">GTP-binding</keyword>
<keyword id="KW-0547">Nucleotide-binding</keyword>
<keyword id="KW-0597">Phosphoprotein</keyword>
<keyword id="KW-1185">Reference proteome</keyword>
<dbReference type="EMBL" id="AK004612">
    <property type="protein sequence ID" value="BAB23409.1"/>
    <property type="status" value="ALT_INIT"/>
    <property type="molecule type" value="mRNA"/>
</dbReference>
<dbReference type="EMBL" id="AK147717">
    <property type="protein sequence ID" value="BAE28091.1"/>
    <property type="status" value="ALT_FRAME"/>
    <property type="molecule type" value="mRNA"/>
</dbReference>
<dbReference type="EMBL" id="AK150068">
    <property type="protein sequence ID" value="BAE29280.1"/>
    <property type="status" value="ALT_FRAME"/>
    <property type="molecule type" value="mRNA"/>
</dbReference>
<dbReference type="EMBL" id="AK150185">
    <property type="protein sequence ID" value="BAE29365.1"/>
    <property type="status" value="ALT_FRAME"/>
    <property type="molecule type" value="mRNA"/>
</dbReference>
<dbReference type="EMBL" id="AK170091">
    <property type="protein sequence ID" value="BAE41557.1"/>
    <property type="molecule type" value="mRNA"/>
</dbReference>
<dbReference type="EMBL" id="BC046228">
    <property type="protein sequence ID" value="AAH46228.1"/>
    <property type="molecule type" value="mRNA"/>
</dbReference>
<dbReference type="EMBL" id="U87965">
    <property type="protein sequence ID" value="AAB51274.1"/>
    <property type="status" value="ALT_INIT"/>
    <property type="molecule type" value="mRNA"/>
</dbReference>
<dbReference type="CCDS" id="CCDS27648.1"/>
<dbReference type="PIR" id="JC5292">
    <property type="entry name" value="JC5292"/>
</dbReference>
<dbReference type="RefSeq" id="NP_038846.2">
    <property type="nucleotide sequence ID" value="NM_013818.2"/>
</dbReference>
<dbReference type="PDB" id="1KJ2">
    <property type="method" value="X-ray"/>
    <property type="resolution" value="2.71 A"/>
    <property type="chains" value="P/Q=246-253"/>
</dbReference>
<dbReference type="PDB" id="1KJ3">
    <property type="method" value="X-ray"/>
    <property type="resolution" value="2.30 A"/>
    <property type="chains" value="P/Q=246-253"/>
</dbReference>
<dbReference type="PDBsum" id="1KJ2"/>
<dbReference type="PDBsum" id="1KJ3"/>
<dbReference type="SMR" id="O08582"/>
<dbReference type="BioGRID" id="200118">
    <property type="interactions" value="7"/>
</dbReference>
<dbReference type="FunCoup" id="O08582">
    <property type="interactions" value="2456"/>
</dbReference>
<dbReference type="IntAct" id="O08582">
    <property type="interactions" value="1"/>
</dbReference>
<dbReference type="MINT" id="O08582"/>
<dbReference type="STRING" id="10090.ENSMUSP00000043575"/>
<dbReference type="GlyGen" id="O08582">
    <property type="glycosylation" value="2 sites, 1 O-linked glycan (1 site)"/>
</dbReference>
<dbReference type="iPTMnet" id="O08582"/>
<dbReference type="PhosphoSitePlus" id="O08582"/>
<dbReference type="SwissPalm" id="O08582"/>
<dbReference type="jPOST" id="O08582"/>
<dbReference type="PaxDb" id="10090-ENSMUSP00000043575"/>
<dbReference type="PeptideAtlas" id="O08582"/>
<dbReference type="ProteomicsDB" id="271345"/>
<dbReference type="Pumba" id="O08582"/>
<dbReference type="Antibodypedia" id="26419">
    <property type="antibodies" value="196 antibodies from 27 providers"/>
</dbReference>
<dbReference type="Ensembl" id="ENSMUST00000046463.10">
    <property type="protein sequence ID" value="ENSMUSP00000043575.9"/>
    <property type="gene ID" value="ENSMUSG00000042535.10"/>
</dbReference>
<dbReference type="GeneID" id="14904"/>
<dbReference type="KEGG" id="mmu:14904"/>
<dbReference type="UCSC" id="uc007wuf.1">
    <property type="organism name" value="mouse"/>
</dbReference>
<dbReference type="AGR" id="MGI:109443"/>
<dbReference type="CTD" id="9567"/>
<dbReference type="MGI" id="MGI:109443">
    <property type="gene designation" value="Gtpbp1"/>
</dbReference>
<dbReference type="VEuPathDB" id="HostDB:ENSMUSG00000042535"/>
<dbReference type="eggNOG" id="KOG0463">
    <property type="taxonomic scope" value="Eukaryota"/>
</dbReference>
<dbReference type="GeneTree" id="ENSGT00940000156054"/>
<dbReference type="HOGENOM" id="CLU_012821_2_0_1"/>
<dbReference type="InParanoid" id="O08582"/>
<dbReference type="OMA" id="FRFIQRP"/>
<dbReference type="OrthoDB" id="248233at2759"/>
<dbReference type="PhylomeDB" id="O08582"/>
<dbReference type="TreeFam" id="TF350446"/>
<dbReference type="BioGRID-ORCS" id="14904">
    <property type="hits" value="2 hits in 79 CRISPR screens"/>
</dbReference>
<dbReference type="CD-CODE" id="CE726F99">
    <property type="entry name" value="Postsynaptic density"/>
</dbReference>
<dbReference type="ChiTaRS" id="Gtpbp1">
    <property type="organism name" value="mouse"/>
</dbReference>
<dbReference type="EvolutionaryTrace" id="O08582"/>
<dbReference type="PRO" id="PR:O08582"/>
<dbReference type="Proteomes" id="UP000000589">
    <property type="component" value="Chromosome 15"/>
</dbReference>
<dbReference type="RNAct" id="O08582">
    <property type="molecule type" value="protein"/>
</dbReference>
<dbReference type="Bgee" id="ENSMUSG00000042535">
    <property type="expression patterns" value="Expressed in retinal neural layer and 252 other cell types or tissues"/>
</dbReference>
<dbReference type="ExpressionAtlas" id="O08582">
    <property type="expression patterns" value="baseline and differential"/>
</dbReference>
<dbReference type="GO" id="GO:0000177">
    <property type="term" value="C:cytoplasmic exosome (RNase complex)"/>
    <property type="evidence" value="ECO:0000250"/>
    <property type="project" value="UniProtKB"/>
</dbReference>
<dbReference type="GO" id="GO:0005829">
    <property type="term" value="C:cytosol"/>
    <property type="evidence" value="ECO:0000250"/>
    <property type="project" value="UniProtKB"/>
</dbReference>
<dbReference type="GO" id="GO:1904678">
    <property type="term" value="F:alpha-aminoacyl-tRNA binding"/>
    <property type="evidence" value="ECO:0007669"/>
    <property type="project" value="Ensembl"/>
</dbReference>
<dbReference type="GO" id="GO:0005525">
    <property type="term" value="F:GTP binding"/>
    <property type="evidence" value="ECO:0007669"/>
    <property type="project" value="UniProtKB-KW"/>
</dbReference>
<dbReference type="GO" id="GO:0003924">
    <property type="term" value="F:GTPase activity"/>
    <property type="evidence" value="ECO:0000250"/>
    <property type="project" value="UniProtKB"/>
</dbReference>
<dbReference type="GO" id="GO:0003746">
    <property type="term" value="F:translation elongation factor activity"/>
    <property type="evidence" value="ECO:0007669"/>
    <property type="project" value="Ensembl"/>
</dbReference>
<dbReference type="GO" id="GO:0000049">
    <property type="term" value="F:tRNA binding"/>
    <property type="evidence" value="ECO:0007669"/>
    <property type="project" value="Ensembl"/>
</dbReference>
<dbReference type="GO" id="GO:0002181">
    <property type="term" value="P:cytoplasmic translation"/>
    <property type="evidence" value="ECO:0007669"/>
    <property type="project" value="Ensembl"/>
</dbReference>
<dbReference type="GO" id="GO:0046039">
    <property type="term" value="P:GTP metabolic process"/>
    <property type="evidence" value="ECO:0000250"/>
    <property type="project" value="UniProtKB"/>
</dbReference>
<dbReference type="GO" id="GO:0061014">
    <property type="term" value="P:positive regulation of mRNA catabolic process"/>
    <property type="evidence" value="ECO:0000250"/>
    <property type="project" value="UniProtKB"/>
</dbReference>
<dbReference type="CDD" id="cd04165">
    <property type="entry name" value="GTPBP1_like"/>
    <property type="match status" value="1"/>
</dbReference>
<dbReference type="CDD" id="cd03694">
    <property type="entry name" value="GTPBP_II"/>
    <property type="match status" value="1"/>
</dbReference>
<dbReference type="CDD" id="cd03708">
    <property type="entry name" value="GTPBP_III"/>
    <property type="match status" value="1"/>
</dbReference>
<dbReference type="FunFam" id="2.40.30.10:FF:000028">
    <property type="entry name" value="GTP-binding protein 1,-like"/>
    <property type="match status" value="1"/>
</dbReference>
<dbReference type="FunFam" id="2.40.30.10:FF:000014">
    <property type="entry name" value="Probable GTP-binding protein 1"/>
    <property type="match status" value="1"/>
</dbReference>
<dbReference type="FunFam" id="3.40.50.300:FF:000091">
    <property type="entry name" value="Probable GTP-binding protein 1"/>
    <property type="match status" value="1"/>
</dbReference>
<dbReference type="Gene3D" id="3.40.50.300">
    <property type="entry name" value="P-loop containing nucleotide triphosphate hydrolases"/>
    <property type="match status" value="1"/>
</dbReference>
<dbReference type="Gene3D" id="2.40.30.10">
    <property type="entry name" value="Translation factors"/>
    <property type="match status" value="2"/>
</dbReference>
<dbReference type="InterPro" id="IPR050055">
    <property type="entry name" value="EF-Tu_GTPase"/>
</dbReference>
<dbReference type="InterPro" id="IPR004161">
    <property type="entry name" value="EFTu-like_2"/>
</dbReference>
<dbReference type="InterPro" id="IPR035531">
    <property type="entry name" value="GTPBP1-like"/>
</dbReference>
<dbReference type="InterPro" id="IPR027417">
    <property type="entry name" value="P-loop_NTPase"/>
</dbReference>
<dbReference type="InterPro" id="IPR000795">
    <property type="entry name" value="T_Tr_GTP-bd_dom"/>
</dbReference>
<dbReference type="InterPro" id="IPR009000">
    <property type="entry name" value="Transl_B-barrel_sf"/>
</dbReference>
<dbReference type="InterPro" id="IPR009001">
    <property type="entry name" value="Transl_elong_EF1A/Init_IF2_C"/>
</dbReference>
<dbReference type="PANTHER" id="PTHR43721">
    <property type="entry name" value="ELONGATION FACTOR TU-RELATED"/>
    <property type="match status" value="1"/>
</dbReference>
<dbReference type="PANTHER" id="PTHR43721:SF9">
    <property type="entry name" value="GTP-BINDING PROTEIN 1"/>
    <property type="match status" value="1"/>
</dbReference>
<dbReference type="Pfam" id="PF00009">
    <property type="entry name" value="GTP_EFTU"/>
    <property type="match status" value="1"/>
</dbReference>
<dbReference type="Pfam" id="PF03144">
    <property type="entry name" value="GTP_EFTU_D2"/>
    <property type="match status" value="1"/>
</dbReference>
<dbReference type="SUPFAM" id="SSF50465">
    <property type="entry name" value="EF-Tu/eEF-1alpha/eIF2-gamma C-terminal domain"/>
    <property type="match status" value="1"/>
</dbReference>
<dbReference type="SUPFAM" id="SSF52540">
    <property type="entry name" value="P-loop containing nucleoside triphosphate hydrolases"/>
    <property type="match status" value="1"/>
</dbReference>
<dbReference type="SUPFAM" id="SSF50447">
    <property type="entry name" value="Translation proteins"/>
    <property type="match status" value="1"/>
</dbReference>
<dbReference type="PROSITE" id="PS51722">
    <property type="entry name" value="G_TR_2"/>
    <property type="match status" value="1"/>
</dbReference>
<reference key="1">
    <citation type="journal article" date="2005" name="Science">
        <title>The transcriptional landscape of the mammalian genome.</title>
        <authorList>
            <person name="Carninci P."/>
            <person name="Kasukawa T."/>
            <person name="Katayama S."/>
            <person name="Gough J."/>
            <person name="Frith M.C."/>
            <person name="Maeda N."/>
            <person name="Oyama R."/>
            <person name="Ravasi T."/>
            <person name="Lenhard B."/>
            <person name="Wells C."/>
            <person name="Kodzius R."/>
            <person name="Shimokawa K."/>
            <person name="Bajic V.B."/>
            <person name="Brenner S.E."/>
            <person name="Batalov S."/>
            <person name="Forrest A.R."/>
            <person name="Zavolan M."/>
            <person name="Davis M.J."/>
            <person name="Wilming L.G."/>
            <person name="Aidinis V."/>
            <person name="Allen J.E."/>
            <person name="Ambesi-Impiombato A."/>
            <person name="Apweiler R."/>
            <person name="Aturaliya R.N."/>
            <person name="Bailey T.L."/>
            <person name="Bansal M."/>
            <person name="Baxter L."/>
            <person name="Beisel K.W."/>
            <person name="Bersano T."/>
            <person name="Bono H."/>
            <person name="Chalk A.M."/>
            <person name="Chiu K.P."/>
            <person name="Choudhary V."/>
            <person name="Christoffels A."/>
            <person name="Clutterbuck D.R."/>
            <person name="Crowe M.L."/>
            <person name="Dalla E."/>
            <person name="Dalrymple B.P."/>
            <person name="de Bono B."/>
            <person name="Della Gatta G."/>
            <person name="di Bernardo D."/>
            <person name="Down T."/>
            <person name="Engstrom P."/>
            <person name="Fagiolini M."/>
            <person name="Faulkner G."/>
            <person name="Fletcher C.F."/>
            <person name="Fukushima T."/>
            <person name="Furuno M."/>
            <person name="Futaki S."/>
            <person name="Gariboldi M."/>
            <person name="Georgii-Hemming P."/>
            <person name="Gingeras T.R."/>
            <person name="Gojobori T."/>
            <person name="Green R.E."/>
            <person name="Gustincich S."/>
            <person name="Harbers M."/>
            <person name="Hayashi Y."/>
            <person name="Hensch T.K."/>
            <person name="Hirokawa N."/>
            <person name="Hill D."/>
            <person name="Huminiecki L."/>
            <person name="Iacono M."/>
            <person name="Ikeo K."/>
            <person name="Iwama A."/>
            <person name="Ishikawa T."/>
            <person name="Jakt M."/>
            <person name="Kanapin A."/>
            <person name="Katoh M."/>
            <person name="Kawasawa Y."/>
            <person name="Kelso J."/>
            <person name="Kitamura H."/>
            <person name="Kitano H."/>
            <person name="Kollias G."/>
            <person name="Krishnan S.P."/>
            <person name="Kruger A."/>
            <person name="Kummerfeld S.K."/>
            <person name="Kurochkin I.V."/>
            <person name="Lareau L.F."/>
            <person name="Lazarevic D."/>
            <person name="Lipovich L."/>
            <person name="Liu J."/>
            <person name="Liuni S."/>
            <person name="McWilliam S."/>
            <person name="Madan Babu M."/>
            <person name="Madera M."/>
            <person name="Marchionni L."/>
            <person name="Matsuda H."/>
            <person name="Matsuzawa S."/>
            <person name="Miki H."/>
            <person name="Mignone F."/>
            <person name="Miyake S."/>
            <person name="Morris K."/>
            <person name="Mottagui-Tabar S."/>
            <person name="Mulder N."/>
            <person name="Nakano N."/>
            <person name="Nakauchi H."/>
            <person name="Ng P."/>
            <person name="Nilsson R."/>
            <person name="Nishiguchi S."/>
            <person name="Nishikawa S."/>
            <person name="Nori F."/>
            <person name="Ohara O."/>
            <person name="Okazaki Y."/>
            <person name="Orlando V."/>
            <person name="Pang K.C."/>
            <person name="Pavan W.J."/>
            <person name="Pavesi G."/>
            <person name="Pesole G."/>
            <person name="Petrovsky N."/>
            <person name="Piazza S."/>
            <person name="Reed J."/>
            <person name="Reid J.F."/>
            <person name="Ring B.Z."/>
            <person name="Ringwald M."/>
            <person name="Rost B."/>
            <person name="Ruan Y."/>
            <person name="Salzberg S.L."/>
            <person name="Sandelin A."/>
            <person name="Schneider C."/>
            <person name="Schoenbach C."/>
            <person name="Sekiguchi K."/>
            <person name="Semple C.A."/>
            <person name="Seno S."/>
            <person name="Sessa L."/>
            <person name="Sheng Y."/>
            <person name="Shibata Y."/>
            <person name="Shimada H."/>
            <person name="Shimada K."/>
            <person name="Silva D."/>
            <person name="Sinclair B."/>
            <person name="Sperling S."/>
            <person name="Stupka E."/>
            <person name="Sugiura K."/>
            <person name="Sultana R."/>
            <person name="Takenaka Y."/>
            <person name="Taki K."/>
            <person name="Tammoja K."/>
            <person name="Tan S.L."/>
            <person name="Tang S."/>
            <person name="Taylor M.S."/>
            <person name="Tegner J."/>
            <person name="Teichmann S.A."/>
            <person name="Ueda H.R."/>
            <person name="van Nimwegen E."/>
            <person name="Verardo R."/>
            <person name="Wei C.L."/>
            <person name="Yagi K."/>
            <person name="Yamanishi H."/>
            <person name="Zabarovsky E."/>
            <person name="Zhu S."/>
            <person name="Zimmer A."/>
            <person name="Hide W."/>
            <person name="Bult C."/>
            <person name="Grimmond S.M."/>
            <person name="Teasdale R.D."/>
            <person name="Liu E.T."/>
            <person name="Brusic V."/>
            <person name="Quackenbush J."/>
            <person name="Wahlestedt C."/>
            <person name="Mattick J.S."/>
            <person name="Hume D.A."/>
            <person name="Kai C."/>
            <person name="Sasaki D."/>
            <person name="Tomaru Y."/>
            <person name="Fukuda S."/>
            <person name="Kanamori-Katayama M."/>
            <person name="Suzuki M."/>
            <person name="Aoki J."/>
            <person name="Arakawa T."/>
            <person name="Iida J."/>
            <person name="Imamura K."/>
            <person name="Itoh M."/>
            <person name="Kato T."/>
            <person name="Kawaji H."/>
            <person name="Kawagashira N."/>
            <person name="Kawashima T."/>
            <person name="Kojima M."/>
            <person name="Kondo S."/>
            <person name="Konno H."/>
            <person name="Nakano K."/>
            <person name="Ninomiya N."/>
            <person name="Nishio T."/>
            <person name="Okada M."/>
            <person name="Plessy C."/>
            <person name="Shibata K."/>
            <person name="Shiraki T."/>
            <person name="Suzuki S."/>
            <person name="Tagami M."/>
            <person name="Waki K."/>
            <person name="Watahiki A."/>
            <person name="Okamura-Oho Y."/>
            <person name="Suzuki H."/>
            <person name="Kawai J."/>
            <person name="Hayashizaki Y."/>
        </authorList>
    </citation>
    <scope>NUCLEOTIDE SEQUENCE [LARGE SCALE MRNA]</scope>
    <source>
        <strain>C57BL/6J</strain>
        <strain>NOD</strain>
        <tissue>Bone marrow</tissue>
        <tissue>Dendritic cell</tissue>
        <tissue>Lung</tissue>
        <tissue>Melanocyte</tissue>
    </source>
</reference>
<reference key="2">
    <citation type="journal article" date="2004" name="Genome Res.">
        <title>The status, quality, and expansion of the NIH full-length cDNA project: the Mammalian Gene Collection (MGC).</title>
        <authorList>
            <consortium name="The MGC Project Team"/>
        </authorList>
    </citation>
    <scope>NUCLEOTIDE SEQUENCE [LARGE SCALE MRNA]</scope>
    <source>
        <strain>C57BL/6J</strain>
        <tissue>Brain</tissue>
    </source>
</reference>
<reference key="3">
    <citation type="journal article" date="1997" name="Biochem. Biophys. Res. Commun.">
        <title>Identification of human and mouse GP-1, a putative member of a novel G-protein family.</title>
        <authorList>
            <person name="Senju S."/>
            <person name="Nishimura Y."/>
        </authorList>
    </citation>
    <scope>NUCLEOTIDE SEQUENCE [MRNA] OF 35-668</scope>
    <scope>TISSUE SPECIFICITY</scope>
</reference>
<reference key="4">
    <citation type="journal article" date="2000" name="Mol. Cell. Biol.">
        <title>Immunocytochemical analyses and targeted gene disruption of GTPBP1.</title>
        <authorList>
            <person name="Senju S."/>
            <person name="Iyama K."/>
            <person name="Kudo H."/>
            <person name="Aizawa S."/>
            <person name="Nishimura Y."/>
        </authorList>
    </citation>
    <scope>DISRUPTION PHENOTYPE</scope>
    <scope>SUBCELLULAR LOCATION</scope>
    <scope>TISSUE SPECIFICITY</scope>
</reference>
<reference key="5">
    <citation type="journal article" date="2004" name="Mol. Cell. Proteomics">
        <title>Phosphoproteomic analysis of the developing mouse brain.</title>
        <authorList>
            <person name="Ballif B.A."/>
            <person name="Villen J."/>
            <person name="Beausoleil S.A."/>
            <person name="Schwartz D."/>
            <person name="Gygi S.P."/>
        </authorList>
    </citation>
    <scope>IDENTIFICATION BY MASS SPECTROMETRY [LARGE SCALE ANALYSIS]</scope>
    <source>
        <tissue>Embryonic brain</tissue>
    </source>
</reference>
<reference key="6">
    <citation type="journal article" date="2007" name="Proc. Natl. Acad. Sci. U.S.A.">
        <title>Large-scale phosphorylation analysis of mouse liver.</title>
        <authorList>
            <person name="Villen J."/>
            <person name="Beausoleil S.A."/>
            <person name="Gerber S.A."/>
            <person name="Gygi S.P."/>
        </authorList>
    </citation>
    <scope>PHOSPHORYLATION [LARGE SCALE ANALYSIS] AT SER-6; SER-12; SER-44 AND SER-47</scope>
    <scope>IDENTIFICATION BY MASS SPECTROMETRY [LARGE SCALE ANALYSIS]</scope>
    <source>
        <tissue>Liver</tissue>
    </source>
</reference>
<reference key="7">
    <citation type="journal article" date="2009" name="Mol. Cell. Proteomics">
        <title>Large scale localization of protein phosphorylation by use of electron capture dissociation mass spectrometry.</title>
        <authorList>
            <person name="Sweet S.M."/>
            <person name="Bailey C.M."/>
            <person name="Cunningham D.L."/>
            <person name="Heath J.K."/>
            <person name="Cooper H.J."/>
        </authorList>
    </citation>
    <scope>IDENTIFICATION BY MASS SPECTROMETRY [LARGE SCALE ANALYSIS]</scope>
    <source>
        <tissue>Embryonic fibroblast</tissue>
    </source>
</reference>
<reference key="8">
    <citation type="journal article" date="2010" name="Cell">
        <title>A tissue-specific atlas of mouse protein phosphorylation and expression.</title>
        <authorList>
            <person name="Huttlin E.L."/>
            <person name="Jedrychowski M.P."/>
            <person name="Elias J.E."/>
            <person name="Goswami T."/>
            <person name="Rad R."/>
            <person name="Beausoleil S.A."/>
            <person name="Villen J."/>
            <person name="Haas W."/>
            <person name="Sowa M.E."/>
            <person name="Gygi S.P."/>
        </authorList>
    </citation>
    <scope>PHOSPHORYLATION [LARGE SCALE ANALYSIS] AT SER-8; SER-12; SER-24; SER-25; SER-44 AND SER-47</scope>
    <scope>IDENTIFICATION BY MASS SPECTROMETRY [LARGE SCALE ANALYSIS]</scope>
    <source>
        <tissue>Brain</tissue>
        <tissue>Brown adipose tissue</tissue>
        <tissue>Heart</tissue>
        <tissue>Kidney</tissue>
        <tissue>Liver</tissue>
        <tissue>Lung</tissue>
        <tissue>Pancreas</tissue>
        <tissue>Spleen</tissue>
        <tissue>Testis</tissue>
    </source>
</reference>
<reference key="9">
    <citation type="journal article" date="2011" name="FASEB J.">
        <title>Modulation of exosome-mediated mRNA turnover by interaction of GTP-binding protein 1 (GTPBP1) with its target mRNAs.</title>
        <authorList>
            <person name="Woo K.C."/>
            <person name="Kim T.D."/>
            <person name="Lee K.H."/>
            <person name="Kim D.Y."/>
            <person name="Kim S."/>
            <person name="Lee H.R."/>
            <person name="Kang H.J."/>
            <person name="Chung S.J."/>
            <person name="Senju S."/>
            <person name="Nishimura Y."/>
            <person name="Kim K.T."/>
        </authorList>
    </citation>
    <scope>DISRUPTION PHENOTYPE</scope>
</reference>
<reference key="10">
    <citation type="journal article" date="2002" name="Immunity">
        <title>A T cell receptor CDR3beta loop undergoes conformational changes of unprecedented magnitude upon binding to a peptide/MHC class I complex.</title>
        <authorList>
            <person name="Reiser J.B."/>
            <person name="Gregoire C."/>
            <person name="Darnault C."/>
            <person name="Mosser T."/>
            <person name="Guimezanes A."/>
            <person name="Schmitt-Verhulst A.M."/>
            <person name="Fontecilla-Camps J.C."/>
            <person name="Mazza G."/>
            <person name="Malissen B."/>
            <person name="Housset D."/>
        </authorList>
    </citation>
    <scope>X-RAY CRYSTALLOGRAPHY (2.3 ANGSTROMS) OF 246-253 IN COMPLEX WITH MHC</scope>
</reference>
<comment type="function">
    <text evidence="2">Promotes degradation of target mRNA species. Plays a role in the regulation of circadian mRNA stability. Binds GTP and has GTPase activity (By similarity).</text>
</comment>
<comment type="subunit">
    <text evidence="1">Interacts with EXOSC2/RRP4, EXOSC3/RRP40, EXOSC5/RRP46, HNRNPD, HNRNPR and SYNCRIP. Identified in a complex with AANAT mRNA, but does not bind mRNA by itself (By similarity).</text>
</comment>
<comment type="subcellular location">
    <subcellularLocation>
        <location evidence="7">Cytoplasm</location>
    </subcellularLocation>
</comment>
<comment type="tissue specificity">
    <text evidence="7 9">Detected in some neurons in the brain cortex. Detected in small arteries, dendritic cells and macrophages in the thymus. Detected in lung bronchi, in bronchial epithelial cells and in bronchial smooth muscle cells. Detected in smooth muscle cells in a broad range of organs (at protein level). Expressed in brain, thymus, lung, and kidney.</text>
</comment>
<comment type="disruption phenotype">
    <text evidence="7 8">No visible phenotype. Mice are born at the expected Mendelian ratio, develop normally and are fertile. They exhibit increased stability of some mRNA species.</text>
</comment>
<comment type="similarity">
    <text evidence="5">Belongs to the TRAFAC class translation factor GTPase superfamily. Classic translation factor GTPase family. GTPBP1 subfamily.</text>
</comment>
<comment type="sequence caution" evidence="10">
    <conflict type="erroneous initiation">
        <sequence resource="EMBL-CDS" id="AAB51274"/>
    </conflict>
    <text>Truncated N-terminus.</text>
</comment>
<comment type="sequence caution" evidence="10">
    <conflict type="erroneous initiation">
        <sequence resource="EMBL-CDS" id="BAB23409"/>
    </conflict>
    <text>Truncated N-terminus.</text>
</comment>
<comment type="sequence caution" evidence="10">
    <conflict type="frameshift">
        <sequence resource="EMBL-CDS" id="BAE28091"/>
    </conflict>
</comment>
<comment type="sequence caution" evidence="10">
    <conflict type="frameshift">
        <sequence resource="EMBL-CDS" id="BAE29280"/>
    </conflict>
</comment>
<comment type="sequence caution" evidence="10">
    <conflict type="frameshift">
        <sequence resource="EMBL-CDS" id="BAE29365"/>
    </conflict>
</comment>
<gene>
    <name type="primary">Gtpbp1</name>
    <name type="synonym">Gtpbp</name>
</gene>
<name>GTPB1_MOUSE</name>
<evidence type="ECO:0000250" key="1"/>
<evidence type="ECO:0000250" key="2">
    <source>
        <dbReference type="UniProtKB" id="D2XV59"/>
    </source>
</evidence>
<evidence type="ECO:0000250" key="3">
    <source>
        <dbReference type="UniProtKB" id="O00178"/>
    </source>
</evidence>
<evidence type="ECO:0000255" key="4"/>
<evidence type="ECO:0000255" key="5">
    <source>
        <dbReference type="PROSITE-ProRule" id="PRU01059"/>
    </source>
</evidence>
<evidence type="ECO:0000256" key="6">
    <source>
        <dbReference type="SAM" id="MobiDB-lite"/>
    </source>
</evidence>
<evidence type="ECO:0000269" key="7">
    <source>
    </source>
</evidence>
<evidence type="ECO:0000269" key="8">
    <source>
    </source>
</evidence>
<evidence type="ECO:0000269" key="9">
    <source>
    </source>
</evidence>
<evidence type="ECO:0000305" key="10"/>
<evidence type="ECO:0007744" key="11">
    <source>
    </source>
</evidence>
<evidence type="ECO:0007744" key="12">
    <source>
    </source>
</evidence>
<proteinExistence type="evidence at protein level"/>